<keyword id="KW-0997">Cell inner membrane</keyword>
<keyword id="KW-1003">Cell membrane</keyword>
<keyword id="KW-0472">Membrane</keyword>
<keyword id="KW-0627">Porphyrin biosynthesis</keyword>
<keyword id="KW-1185">Reference proteome</keyword>
<keyword id="KW-0677">Repeat</keyword>
<keyword id="KW-0802">TPR repeat</keyword>
<keyword id="KW-0812">Transmembrane</keyword>
<keyword id="KW-1133">Transmembrane helix</keyword>
<sequence>MLKVLLLFVLLIAGIVVGPMIAGHQGYVLIQTDNYNIETSVTGLAIILILAMVVLFAIEWLLRRIFRTGAHTRGWFVGRKRRRARKQTEQALLKLAEGDYQQVEKLMAKNADHAEQPVVNYLLAAEAAQQRGDEARANQHLERAAELAGNDTIPVEITRVRLQLARNENHAARHGVDKLLEVTPRHPEVLRLAEQAYIRTGAWSSLLDIIPSMAKAHVGDEEHRAMLEQQAWIGLMDQARADNGSEGLRNWWKNQSRKTRHQVALQVAMAEHLIECDDHDTAQQIIIDGLKRQYDDRLLLPIPRLKTNNPEQLEKVLRQQIKNVGDRPLLWSTLGQSLMKHGEWQEASLAFRAALKQRPDAYDYAWLADALDRLHKPEEAAAMRRDGLMLTLQNNPPQ</sequence>
<proteinExistence type="inferred from homology"/>
<name>HEMY_ECOL6</name>
<protein>
    <recommendedName>
        <fullName>Protein HemY</fullName>
    </recommendedName>
</protein>
<comment type="function">
    <text evidence="1">Involved in a late step of protoheme IX synthesis.</text>
</comment>
<comment type="pathway">
    <text>Porphyrin-containing compound metabolism; protoheme biosynthesis.</text>
</comment>
<comment type="subcellular location">
    <subcellularLocation>
        <location evidence="1">Cell inner membrane</location>
        <topology evidence="1">Multi-pass membrane protein</topology>
    </subcellularLocation>
</comment>
<gene>
    <name type="primary">hemY</name>
    <name type="ordered locus">c4721</name>
</gene>
<accession>P0ACB8</accession>
<accession>P09128</accession>
<organism>
    <name type="scientific">Escherichia coli O6:H1 (strain CFT073 / ATCC 700928 / UPEC)</name>
    <dbReference type="NCBI Taxonomy" id="199310"/>
    <lineage>
        <taxon>Bacteria</taxon>
        <taxon>Pseudomonadati</taxon>
        <taxon>Pseudomonadota</taxon>
        <taxon>Gammaproteobacteria</taxon>
        <taxon>Enterobacterales</taxon>
        <taxon>Enterobacteriaceae</taxon>
        <taxon>Escherichia</taxon>
    </lineage>
</organism>
<evidence type="ECO:0000250" key="1"/>
<evidence type="ECO:0000255" key="2"/>
<reference key="1">
    <citation type="journal article" date="2002" name="Proc. Natl. Acad. Sci. U.S.A.">
        <title>Extensive mosaic structure revealed by the complete genome sequence of uropathogenic Escherichia coli.</title>
        <authorList>
            <person name="Welch R.A."/>
            <person name="Burland V."/>
            <person name="Plunkett G. III"/>
            <person name="Redford P."/>
            <person name="Roesch P."/>
            <person name="Rasko D."/>
            <person name="Buckles E.L."/>
            <person name="Liou S.-R."/>
            <person name="Boutin A."/>
            <person name="Hackett J."/>
            <person name="Stroud D."/>
            <person name="Mayhew G.F."/>
            <person name="Rose D.J."/>
            <person name="Zhou S."/>
            <person name="Schwartz D.C."/>
            <person name="Perna N.T."/>
            <person name="Mobley H.L.T."/>
            <person name="Donnenberg M.S."/>
            <person name="Blattner F.R."/>
        </authorList>
    </citation>
    <scope>NUCLEOTIDE SEQUENCE [LARGE SCALE GENOMIC DNA]</scope>
    <source>
        <strain>CFT073 / ATCC 700928 / UPEC</strain>
    </source>
</reference>
<feature type="chain" id="PRO_0000135277" description="Protein HemY">
    <location>
        <begin position="1"/>
        <end position="398"/>
    </location>
</feature>
<feature type="topological domain" description="Cytoplasmic" evidence="2">
    <location>
        <begin position="1"/>
        <end position="4"/>
    </location>
</feature>
<feature type="transmembrane region" description="Helical" evidence="2">
    <location>
        <begin position="5"/>
        <end position="27"/>
    </location>
</feature>
<feature type="topological domain" description="Periplasmic" evidence="2">
    <location>
        <begin position="28"/>
        <end position="39"/>
    </location>
</feature>
<feature type="transmembrane region" description="Helical" evidence="2">
    <location>
        <begin position="40"/>
        <end position="62"/>
    </location>
</feature>
<feature type="topological domain" description="Cytoplasmic" evidence="2">
    <location>
        <begin position="63"/>
        <end position="398"/>
    </location>
</feature>
<feature type="repeat" description="TPR 1">
    <location>
        <begin position="118"/>
        <end position="151"/>
    </location>
</feature>
<feature type="repeat" description="TPR 2">
    <location>
        <begin position="328"/>
        <end position="361"/>
    </location>
</feature>
<dbReference type="EMBL" id="AE014075">
    <property type="protein sequence ID" value="AAN83154.1"/>
    <property type="molecule type" value="Genomic_DNA"/>
</dbReference>
<dbReference type="RefSeq" id="WP_000921791.1">
    <property type="nucleotide sequence ID" value="NZ_CP051263.1"/>
</dbReference>
<dbReference type="SMR" id="P0ACB8"/>
<dbReference type="STRING" id="199310.c4721"/>
<dbReference type="GeneID" id="93778142"/>
<dbReference type="KEGG" id="ecc:c4721"/>
<dbReference type="eggNOG" id="COG3071">
    <property type="taxonomic scope" value="Bacteria"/>
</dbReference>
<dbReference type="HOGENOM" id="CLU_037501_2_0_6"/>
<dbReference type="BioCyc" id="ECOL199310:C4721-MONOMER"/>
<dbReference type="UniPathway" id="UPA00252"/>
<dbReference type="Proteomes" id="UP000001410">
    <property type="component" value="Chromosome"/>
</dbReference>
<dbReference type="GO" id="GO:0005886">
    <property type="term" value="C:plasma membrane"/>
    <property type="evidence" value="ECO:0007669"/>
    <property type="project" value="UniProtKB-SubCell"/>
</dbReference>
<dbReference type="GO" id="GO:0042168">
    <property type="term" value="P:heme metabolic process"/>
    <property type="evidence" value="ECO:0007669"/>
    <property type="project" value="InterPro"/>
</dbReference>
<dbReference type="GO" id="GO:0006779">
    <property type="term" value="P:porphyrin-containing compound biosynthetic process"/>
    <property type="evidence" value="ECO:0007669"/>
    <property type="project" value="UniProtKB-KW"/>
</dbReference>
<dbReference type="Gene3D" id="1.25.40.10">
    <property type="entry name" value="Tetratricopeptide repeat domain"/>
    <property type="match status" value="2"/>
</dbReference>
<dbReference type="InterPro" id="IPR005254">
    <property type="entry name" value="Heme_biosyn_assoc_TPR_pro"/>
</dbReference>
<dbReference type="InterPro" id="IPR010817">
    <property type="entry name" value="HemY_N"/>
</dbReference>
<dbReference type="InterPro" id="IPR011990">
    <property type="entry name" value="TPR-like_helical_dom_sf"/>
</dbReference>
<dbReference type="InterPro" id="IPR013105">
    <property type="entry name" value="TPR_2"/>
</dbReference>
<dbReference type="InterPro" id="IPR019734">
    <property type="entry name" value="TPR_rpt"/>
</dbReference>
<dbReference type="NCBIfam" id="NF008017">
    <property type="entry name" value="PRK10747.1"/>
    <property type="match status" value="1"/>
</dbReference>
<dbReference type="NCBIfam" id="TIGR00540">
    <property type="entry name" value="TPR_hemY_coli"/>
    <property type="match status" value="1"/>
</dbReference>
<dbReference type="Pfam" id="PF07219">
    <property type="entry name" value="HemY_N"/>
    <property type="match status" value="1"/>
</dbReference>
<dbReference type="Pfam" id="PF07719">
    <property type="entry name" value="TPR_2"/>
    <property type="match status" value="1"/>
</dbReference>
<dbReference type="SUPFAM" id="SSF48452">
    <property type="entry name" value="TPR-like"/>
    <property type="match status" value="1"/>
</dbReference>
<dbReference type="PROSITE" id="PS50005">
    <property type="entry name" value="TPR"/>
    <property type="match status" value="2"/>
</dbReference>
<dbReference type="PROSITE" id="PS50293">
    <property type="entry name" value="TPR_REGION"/>
    <property type="match status" value="1"/>
</dbReference>